<organism>
    <name type="scientific">African swine fever virus (isolate Tick/Malawi/Lil 20-1/1983)</name>
    <name type="common">ASFV</name>
    <dbReference type="NCBI Taxonomy" id="10500"/>
    <lineage>
        <taxon>Viruses</taxon>
        <taxon>Varidnaviria</taxon>
        <taxon>Bamfordvirae</taxon>
        <taxon>Nucleocytoviricota</taxon>
        <taxon>Pokkesviricetes</taxon>
        <taxon>Asfuvirales</taxon>
        <taxon>Asfarviridae</taxon>
        <taxon>Asfivirus</taxon>
        <taxon>African swine fever virus</taxon>
    </lineage>
</organism>
<gene>
    <name type="ordered locus">Mal-031</name>
</gene>
<dbReference type="EMBL" id="U03762">
    <property type="protein sequence ID" value="AAA50537.1"/>
    <property type="molecule type" value="Genomic_DNA"/>
</dbReference>
<dbReference type="EMBL" id="AY261361">
    <property type="status" value="NOT_ANNOTATED_CDS"/>
    <property type="molecule type" value="Genomic_DNA"/>
</dbReference>
<dbReference type="SMR" id="Q65124"/>
<dbReference type="Proteomes" id="UP000000860">
    <property type="component" value="Segment"/>
</dbReference>
<dbReference type="InterPro" id="IPR004858">
    <property type="entry name" value="MGF_505"/>
</dbReference>
<dbReference type="Pfam" id="PF03158">
    <property type="entry name" value="DUF249"/>
    <property type="match status" value="1"/>
</dbReference>
<comment type="function">
    <text evidence="1">Plays a role in virus cell tropism, and may be required for efficient virus replication in macrophages.</text>
</comment>
<comment type="similarity">
    <text evidence="2">Belongs to the asfivirus MGF 505 family.</text>
</comment>
<name>5051R_ASFM2</name>
<feature type="chain" id="PRO_0000373314" description="Protein MGF 505-1R">
    <location>
        <begin position="1"/>
        <end position="530"/>
    </location>
</feature>
<proteinExistence type="inferred from homology"/>
<accession>Q65124</accession>
<protein>
    <recommendedName>
        <fullName>Protein MGF 505-1R</fullName>
    </recommendedName>
</protein>
<reference key="1">
    <citation type="journal article" date="1994" name="Virology">
        <title>Two novel multigene families, 530 and 300, in the terminal variable regions of African swine fever virus genome.</title>
        <authorList>
            <person name="Yozawa T."/>
            <person name="Kutish G.F."/>
            <person name="Afonso C.L."/>
            <person name="Lu Z."/>
            <person name="Rock D.L."/>
        </authorList>
    </citation>
    <scope>NUCLEOTIDE SEQUENCE [GENOMIC DNA]</scope>
</reference>
<reference key="2">
    <citation type="submission" date="2003-03" db="EMBL/GenBank/DDBJ databases">
        <title>African swine fever virus genomes.</title>
        <authorList>
            <person name="Kutish G.F."/>
            <person name="Rock D.L."/>
        </authorList>
    </citation>
    <scope>NUCLEOTIDE SEQUENCE [LARGE SCALE GENOMIC DNA]</scope>
</reference>
<evidence type="ECO:0000250" key="1"/>
<evidence type="ECO:0000305" key="2"/>
<sequence length="530" mass="62482">MFSLQNLCRKTLPDCKLPEFFDEYILQLLGLYWENHGTIQRAGNNCVLIQQHNLIPVNEALRIAASEENYEIVSLLLAWEGNLYYAIIGALEGNRPDLIRKYDDQIKDHHEILPFIDDPIIFHKCHIMRRCFFNCILYQAVKYSKFRVLLYFKHRLGDDLPLTHLLIEKACEDHNYEVIKWIYENLHSYNIMDTFECAIAHKDLRLYCLGYTFIYNRIVPYKYHHLDICILSSLQLLHKVAAKGYLDFILETLKYDHNINNIDIILTQAATYNHRKILTYFIPQLTYAQIEQCLLVAIKTKASKKTLNLLLSHLNLSIKLIKKISQYVVTYNSTNIISILSMRRKKKIYLDIILTEFVKNAIFNKFVVRCMDTFSINPERIVKMAARINRMMLVKNISERVWKNHAVKLKHLKHAVHTMKHQEGKNRLMNFIYDHCYYHMQGEEIFGLARFYAIHHAPKLFDVFYDCCMLDATRFKSLLLDCPHIIGKNAYDAGINLVNKYIGNLFAMGVLSKKEILQDYPSIYSKHDMF</sequence>
<organismHost>
    <name type="scientific">Ornithodoros</name>
    <name type="common">relapsing fever ticks</name>
    <dbReference type="NCBI Taxonomy" id="6937"/>
</organismHost>
<organismHost>
    <name type="scientific">Phacochoerus aethiopicus</name>
    <name type="common">Warthog</name>
    <dbReference type="NCBI Taxonomy" id="85517"/>
</organismHost>
<organismHost>
    <name type="scientific">Phacochoerus africanus</name>
    <name type="common">Warthog</name>
    <dbReference type="NCBI Taxonomy" id="41426"/>
</organismHost>
<organismHost>
    <name type="scientific">Potamochoerus larvatus</name>
    <name type="common">Bushpig</name>
    <dbReference type="NCBI Taxonomy" id="273792"/>
</organismHost>
<organismHost>
    <name type="scientific">Sus scrofa</name>
    <name type="common">Pig</name>
    <dbReference type="NCBI Taxonomy" id="9823"/>
</organismHost>